<gene>
    <name type="primary">virB1</name>
    <name type="ordered locus">Atu6167</name>
    <name type="ORF">AGR_pTi_3</name>
</gene>
<protein>
    <recommendedName>
        <fullName>Protein virB1</fullName>
    </recommendedName>
</protein>
<dbReference type="EMBL" id="X53264">
    <property type="protein sequence ID" value="CAA37354.1"/>
    <property type="status" value="ALT_INIT"/>
    <property type="molecule type" value="Genomic_DNA"/>
</dbReference>
<dbReference type="EMBL" id="J03320">
    <property type="protein sequence ID" value="AAA91591.1"/>
    <property type="molecule type" value="Genomic_DNA"/>
</dbReference>
<dbReference type="EMBL" id="AE007871">
    <property type="protein sequence ID" value="AAK90928.2"/>
    <property type="molecule type" value="Genomic_DNA"/>
</dbReference>
<dbReference type="PIR" id="AE3248">
    <property type="entry name" value="AE3248"/>
</dbReference>
<dbReference type="PIR" id="S12341">
    <property type="entry name" value="B1AG58"/>
</dbReference>
<dbReference type="RefSeq" id="NP_396487.2">
    <property type="nucleotide sequence ID" value="NC_003065.3"/>
</dbReference>
<dbReference type="RefSeq" id="WP_010974915.1">
    <property type="nucleotide sequence ID" value="NC_003065.3"/>
</dbReference>
<dbReference type="IntAct" id="P17791">
    <property type="interactions" value="2"/>
</dbReference>
<dbReference type="CAZy" id="GH23">
    <property type="family name" value="Glycoside Hydrolase Family 23"/>
</dbReference>
<dbReference type="EnsemblBacteria" id="AAK90928">
    <property type="protein sequence ID" value="AAK90928"/>
    <property type="gene ID" value="Atu6167"/>
</dbReference>
<dbReference type="GeneID" id="1137490"/>
<dbReference type="KEGG" id="atu:Atu6167"/>
<dbReference type="HOGENOM" id="CLU_076837_1_0_5"/>
<dbReference type="OrthoDB" id="8277605at2"/>
<dbReference type="Proteomes" id="UP000000813">
    <property type="component" value="Plasmid Ti"/>
</dbReference>
<dbReference type="GO" id="GO:0043684">
    <property type="term" value="C:type IV secretion system complex"/>
    <property type="evidence" value="ECO:0000317"/>
    <property type="project" value="PAMGO_GAT"/>
</dbReference>
<dbReference type="GO" id="GO:0030255">
    <property type="term" value="P:protein secretion by the type IV secretion system"/>
    <property type="evidence" value="ECO:0000317"/>
    <property type="project" value="PAMGO_GAT"/>
</dbReference>
<dbReference type="CDD" id="cd16892">
    <property type="entry name" value="LT_VirB1-like"/>
    <property type="match status" value="1"/>
</dbReference>
<dbReference type="FunFam" id="1.10.530.10:FF:000031">
    <property type="entry name" value="Lytic transglycosylase"/>
    <property type="match status" value="1"/>
</dbReference>
<dbReference type="Gene3D" id="1.10.530.10">
    <property type="match status" value="1"/>
</dbReference>
<dbReference type="InterPro" id="IPR023346">
    <property type="entry name" value="Lysozyme-like_dom_sf"/>
</dbReference>
<dbReference type="InterPro" id="IPR008258">
    <property type="entry name" value="Transglycosylase_SLT_dom_1"/>
</dbReference>
<dbReference type="NCBIfam" id="NF010438">
    <property type="entry name" value="PRK13864.1"/>
    <property type="match status" value="1"/>
</dbReference>
<dbReference type="Pfam" id="PF01464">
    <property type="entry name" value="SLT"/>
    <property type="match status" value="1"/>
</dbReference>
<dbReference type="SUPFAM" id="SSF53955">
    <property type="entry name" value="Lysozyme-like"/>
    <property type="match status" value="1"/>
</dbReference>
<comment type="function">
    <text>VirB proteins are suggested to act at the bacterial surface and there play an important role in directing T-DNA transfer to plant cells.</text>
</comment>
<comment type="similarity">
    <text evidence="3">Belongs to the virb1 family.</text>
</comment>
<comment type="sequence caution" evidence="3">
    <conflict type="erroneous initiation">
        <sequence resource="EMBL-CDS" id="CAA37354"/>
    </conflict>
</comment>
<evidence type="ECO:0000255" key="1"/>
<evidence type="ECO:0000256" key="2">
    <source>
        <dbReference type="SAM" id="MobiDB-lite"/>
    </source>
</evidence>
<evidence type="ECO:0000305" key="3"/>
<keyword id="KW-0192">Crown gall tumor</keyword>
<keyword id="KW-0614">Plasmid</keyword>
<keyword id="KW-1185">Reference proteome</keyword>
<keyword id="KW-0732">Signal</keyword>
<proteinExistence type="inferred from homology"/>
<organism>
    <name type="scientific">Agrobacterium fabrum (strain C58 / ATCC 33970)</name>
    <name type="common">Agrobacterium tumefaciens (strain C58)</name>
    <dbReference type="NCBI Taxonomy" id="176299"/>
    <lineage>
        <taxon>Bacteria</taxon>
        <taxon>Pseudomonadati</taxon>
        <taxon>Pseudomonadota</taxon>
        <taxon>Alphaproteobacteria</taxon>
        <taxon>Hyphomicrobiales</taxon>
        <taxon>Rhizobiaceae</taxon>
        <taxon>Rhizobium/Agrobacterium group</taxon>
        <taxon>Agrobacterium</taxon>
        <taxon>Agrobacterium tumefaciens complex</taxon>
    </lineage>
</organism>
<accession>P17791</accession>
<name>VIRB1_AGRFC</name>
<feature type="signal peptide" evidence="1">
    <location>
        <begin position="1"/>
        <end position="28"/>
    </location>
</feature>
<feature type="chain" id="PRO_0000022657" description="Protein virB1">
    <location>
        <begin position="29"/>
        <end position="245"/>
    </location>
</feature>
<feature type="region of interest" description="Disordered" evidence="2">
    <location>
        <begin position="176"/>
        <end position="245"/>
    </location>
</feature>
<feature type="compositionally biased region" description="Basic and acidic residues" evidence="2">
    <location>
        <begin position="183"/>
        <end position="193"/>
    </location>
</feature>
<feature type="sequence conflict" description="In Ref. 2 and 3." evidence="3" ref="2 3">
    <original>P</original>
    <variation>T</variation>
    <location>
        <position position="18"/>
    </location>
</feature>
<feature type="sequence conflict" description="In Ref. 2 and 3." evidence="3" ref="2 3">
    <original>R</original>
    <variation>G</variation>
    <location>
        <position position="85"/>
    </location>
</feature>
<sequence>MLKATGPLSIILLASTCPSSGAAPLSFAEFNNFARECAPSVAPSTLAAIAQVESRFDPLAVHDNTTGETLHWQNQAQATQVVMDRLEARHSLDVGLMQINSRNFSVLGLTPDGALQPCTSLSVAANLLGSRYAGGNTADDEQLSLRRAISAYNTGDFTHGFANGYVRKVETAAQQLVPPLTARPKDDREKPGSEETWDVWGAYKRRSPEGGAGGSSGPPPPPDEDNRKSEDDDQLLFDLNQGGPQ</sequence>
<geneLocation type="plasmid">
    <name>pTiC58</name>
</geneLocation>
<reference key="1">
    <citation type="journal article" date="1990" name="Mol. Gen. Genet.">
        <title>The virB operon of Agrobacterium tumefaciens pTiC58 encodes 11 open reading frames.</title>
        <authorList>
            <person name="Kuldau G.A."/>
            <person name="de Vos G."/>
            <person name="Owen J."/>
            <person name="McCaffrey G."/>
            <person name="Zambryski P."/>
        </authorList>
    </citation>
    <scope>NUCLEOTIDE SEQUENCE [GENOMIC DNA]</scope>
</reference>
<reference key="2">
    <citation type="journal article" date="1990" name="Plasmid">
        <title>Molecular characterization of the vir regulon of Agrobacterium tumefaciens: complete nucleotide sequence and gene organization of the 28.63-kbp regulon cloned as a single unit.</title>
        <authorList>
            <person name="Rogowsky P.M."/>
            <person name="Powell B.S."/>
            <person name="Shirasu K."/>
            <person name="Lin T.-S."/>
            <person name="Morel P."/>
            <person name="Zyprian E.M."/>
            <person name="Steck T.R."/>
            <person name="Kado C.I."/>
        </authorList>
    </citation>
    <scope>NUCLEOTIDE SEQUENCE [GENOMIC DNA]</scope>
</reference>
<reference key="3">
    <citation type="journal article" date="1990" name="Mol. Microbiol.">
        <title>Characterization of the virB operon of an Agrobacterium tumefaciens Ti plasmid: nucleotide sequence and protein analysis.</title>
        <authorList>
            <person name="Shirasu K."/>
            <person name="Morel P."/>
            <person name="Kado C.I."/>
        </authorList>
    </citation>
    <scope>NUCLEOTIDE SEQUENCE [GENOMIC DNA]</scope>
</reference>
<reference key="4">
    <citation type="journal article" date="2001" name="Science">
        <title>The genome of the natural genetic engineer Agrobacterium tumefaciens C58.</title>
        <authorList>
            <person name="Wood D.W."/>
            <person name="Setubal J.C."/>
            <person name="Kaul R."/>
            <person name="Monks D.E."/>
            <person name="Kitajima J.P."/>
            <person name="Okura V.K."/>
            <person name="Zhou Y."/>
            <person name="Chen L."/>
            <person name="Wood G.E."/>
            <person name="Almeida N.F. Jr."/>
            <person name="Woo L."/>
            <person name="Chen Y."/>
            <person name="Paulsen I.T."/>
            <person name="Eisen J.A."/>
            <person name="Karp P.D."/>
            <person name="Bovee D. Sr."/>
            <person name="Chapman P."/>
            <person name="Clendenning J."/>
            <person name="Deatherage G."/>
            <person name="Gillet W."/>
            <person name="Grant C."/>
            <person name="Kutyavin T."/>
            <person name="Levy R."/>
            <person name="Li M.-J."/>
            <person name="McClelland E."/>
            <person name="Palmieri A."/>
            <person name="Raymond C."/>
            <person name="Rouse G."/>
            <person name="Saenphimmachak C."/>
            <person name="Wu Z."/>
            <person name="Romero P."/>
            <person name="Gordon D."/>
            <person name="Zhang S."/>
            <person name="Yoo H."/>
            <person name="Tao Y."/>
            <person name="Biddle P."/>
            <person name="Jung M."/>
            <person name="Krespan W."/>
            <person name="Perry M."/>
            <person name="Gordon-Kamm B."/>
            <person name="Liao L."/>
            <person name="Kim S."/>
            <person name="Hendrick C."/>
            <person name="Zhao Z.-Y."/>
            <person name="Dolan M."/>
            <person name="Chumley F."/>
            <person name="Tingey S.V."/>
            <person name="Tomb J.-F."/>
            <person name="Gordon M.P."/>
            <person name="Olson M.V."/>
            <person name="Nester E.W."/>
        </authorList>
    </citation>
    <scope>NUCLEOTIDE SEQUENCE [LARGE SCALE GENOMIC DNA]</scope>
</reference>
<reference key="5">
    <citation type="journal article" date="2001" name="Science">
        <title>Genome sequence of the plant pathogen and biotechnology agent Agrobacterium tumefaciens C58.</title>
        <authorList>
            <person name="Goodner B."/>
            <person name="Hinkle G."/>
            <person name="Gattung S."/>
            <person name="Miller N."/>
            <person name="Blanchard M."/>
            <person name="Qurollo B."/>
            <person name="Goldman B.S."/>
            <person name="Cao Y."/>
            <person name="Askenazi M."/>
            <person name="Halling C."/>
            <person name="Mullin L."/>
            <person name="Houmiel K."/>
            <person name="Gordon J."/>
            <person name="Vaudin M."/>
            <person name="Iartchouk O."/>
            <person name="Epp A."/>
            <person name="Liu F."/>
            <person name="Wollam C."/>
            <person name="Allinger M."/>
            <person name="Doughty D."/>
            <person name="Scott C."/>
            <person name="Lappas C."/>
            <person name="Markelz B."/>
            <person name="Flanagan C."/>
            <person name="Crowell C."/>
            <person name="Gurson J."/>
            <person name="Lomo C."/>
            <person name="Sear C."/>
            <person name="Strub G."/>
            <person name="Cielo C."/>
            <person name="Slater S."/>
        </authorList>
    </citation>
    <scope>NUCLEOTIDE SEQUENCE [LARGE SCALE GENOMIC DNA]</scope>
    <source>
        <strain>C58 / ATCC 33970</strain>
    </source>
</reference>